<comment type="function">
    <text evidence="1">Component of the NOP7 complex, which is required for maturation of the 25S and 5.8S ribosomal RNAs and formation of the 60S ribosome.</text>
</comment>
<comment type="subunit">
    <text evidence="1">Component of the NOP7 complex, composed of ERB1, NOP7 and YTM1. The complex is held together by ERB1, which interacts with NOP7 via its N-terminal domain and with YTM1 via a high-affinity interaction between the seven-bladed beta-propeller domains of the 2 proteins. The NOP7 complex associates with the 66S pre-ribosome.</text>
</comment>
<comment type="subcellular location">
    <subcellularLocation>
        <location evidence="1">Nucleus</location>
        <location evidence="1">Nucleolus</location>
    </subcellularLocation>
    <subcellularLocation>
        <location evidence="1">Nucleus</location>
        <location evidence="1">Nucleoplasm</location>
    </subcellularLocation>
</comment>
<comment type="similarity">
    <text evidence="1">Belongs to the WD repeat BOP1/ERB1 family.</text>
</comment>
<comment type="sequence caution" evidence="3">
    <conflict type="frameshift">
        <sequence resource="EMBL-CDS" id="EDP41550"/>
    </conflict>
</comment>
<organism>
    <name type="scientific">Malassezia globosa (strain ATCC MYA-4612 / CBS 7966)</name>
    <name type="common">Dandruff-associated fungus</name>
    <dbReference type="NCBI Taxonomy" id="425265"/>
    <lineage>
        <taxon>Eukaryota</taxon>
        <taxon>Fungi</taxon>
        <taxon>Dikarya</taxon>
        <taxon>Basidiomycota</taxon>
        <taxon>Ustilaginomycotina</taxon>
        <taxon>Malasseziomycetes</taxon>
        <taxon>Malasseziales</taxon>
        <taxon>Malasseziaceae</taxon>
        <taxon>Malassezia</taxon>
    </lineage>
</organism>
<feature type="chain" id="PRO_0000370434" description="Ribosome biogenesis protein ERB1">
    <location>
        <begin position="1"/>
        <end position="864"/>
    </location>
</feature>
<feature type="repeat" description="WD 1">
    <location>
        <begin position="509"/>
        <end position="549"/>
    </location>
</feature>
<feature type="repeat" description="WD 2">
    <location>
        <begin position="559"/>
        <end position="599"/>
    </location>
</feature>
<feature type="repeat" description="WD 3">
    <location>
        <begin position="694"/>
        <end position="732"/>
    </location>
</feature>
<feature type="repeat" description="WD 4">
    <location>
        <begin position="735"/>
        <end position="774"/>
    </location>
</feature>
<feature type="repeat" description="WD 5">
    <location>
        <begin position="778"/>
        <end position="817"/>
    </location>
</feature>
<feature type="repeat" description="WD 6">
    <location>
        <begin position="833"/>
        <end position="864"/>
    </location>
</feature>
<feature type="region of interest" description="Disordered" evidence="2">
    <location>
        <begin position="1"/>
        <end position="153"/>
    </location>
</feature>
<feature type="region of interest" description="Disordered" evidence="2">
    <location>
        <begin position="191"/>
        <end position="231"/>
    </location>
</feature>
<feature type="compositionally biased region" description="Basic and acidic residues" evidence="2">
    <location>
        <begin position="1"/>
        <end position="52"/>
    </location>
</feature>
<feature type="compositionally biased region" description="Acidic residues" evidence="2">
    <location>
        <begin position="53"/>
        <end position="71"/>
    </location>
</feature>
<feature type="compositionally biased region" description="Basic and acidic residues" evidence="2">
    <location>
        <begin position="72"/>
        <end position="83"/>
    </location>
</feature>
<feature type="compositionally biased region" description="Acidic residues" evidence="2">
    <location>
        <begin position="100"/>
        <end position="135"/>
    </location>
</feature>
<accession>A8QD31</accession>
<name>ERB1_MALGO</name>
<keyword id="KW-0539">Nucleus</keyword>
<keyword id="KW-1185">Reference proteome</keyword>
<keyword id="KW-0677">Repeat</keyword>
<keyword id="KW-0690">Ribosome biogenesis</keyword>
<keyword id="KW-0698">rRNA processing</keyword>
<keyword id="KW-0853">WD repeat</keyword>
<gene>
    <name evidence="1" type="primary">ERB1</name>
    <name type="ORF">MGL_4099</name>
</gene>
<reference key="1">
    <citation type="journal article" date="2007" name="Proc. Natl. Acad. Sci. U.S.A.">
        <title>Dandruff-associated Malassezia genomes reveal convergent and divergent virulence traits shared with plant and human fungal pathogens.</title>
        <authorList>
            <person name="Xu J."/>
            <person name="Saunders C.W."/>
            <person name="Hu P."/>
            <person name="Grant R.A."/>
            <person name="Boekhout T."/>
            <person name="Kuramae E.E."/>
            <person name="Kronstad J.W."/>
            <person name="DeAngelis Y.M."/>
            <person name="Reeder N.L."/>
            <person name="Johnstone K.R."/>
            <person name="Leland M."/>
            <person name="Fieno A.M."/>
            <person name="Begley W.M."/>
            <person name="Sun Y."/>
            <person name="Lacey M.P."/>
            <person name="Chaudhary T."/>
            <person name="Keough T."/>
            <person name="Chu L."/>
            <person name="Sears R."/>
            <person name="Yuan B."/>
            <person name="Dawson T.L. Jr."/>
        </authorList>
    </citation>
    <scope>NUCLEOTIDE SEQUENCE [LARGE SCALE GENOMIC DNA]</scope>
    <source>
        <strain>ATCC MYA-4612 / CBS 7966</strain>
    </source>
</reference>
<protein>
    <recommendedName>
        <fullName evidence="1">Ribosome biogenesis protein ERB1</fullName>
    </recommendedName>
    <alternativeName>
        <fullName evidence="1">Eukaryotic ribosome biogenesis protein 1</fullName>
    </alternativeName>
</protein>
<sequence length="864" mass="97424">MAVDKGRRPVPPERRAQGRKRAEPGDVTIRETRTRPVHTPEPEPELLAKDGILELEDDDDNDDDDDDDDDDKSNHHDGAPKNEDDMEAFPELVSGKDKDDDGDEDEEEDDEDEDEDASDDEAFDSDDLENWDEEADAKYGDADLSDDDDVKEGDAALERMIARARVKPDESERTTNKLGIDTGVAARFYDESRNDDGSKRGRVVQSHVTGMPKVEYPPIEPEYDSDSSTEDVPNRIGQVPLSWYDDLPHIGYDINGRRVLRPAQGDELDKFLDSVEGEGDGWFSAHDKTSGQDVKLTDEELDIIQRLERAQIPVEAYDPYEPATDWFTQHQQTTPLTARPEPKRRFVPSKWEHKKIMKIVRAIRQGRIVAHAPGRERPAFYNLWSDADEARADHPMHMPAPKLPLPSHVESYNPPAEYLFGDDEKAEWEAAEPEDRKLPFLPAKYAALRLVPGYDQALHERFQRCLDLYMAPRMRRKRLDIDDPDQLLPKLPAPRDLRPFPTHTDVVYAHAPWRIRTVSIDPSGAWLLTGPDDGHVRLWDAALGRCVATWDMNAGVARADRSPVYCVQWCPNRTFGIAAAVSVGRVTLLAPPQCGKTMYEASLAHLTTPHAAEDAATAQWTRASEADRAAGVCVRIDVRNNKHASLVPKYVRWHARGDYFATVSPEAAGEAVLIHQVSKHRSQAPFRRTRRAGNSAMAVQCVCFHPSRPWLFVATQRYVRVYDLVQQSLVKTLQPGVRWISSLDVHPSGDHVIIGSYDRRVLWFDLDLSERPYKALRYHSRAVRAVAYHPRFPLFASAADDGTVHVYHGTVYSDLLQNALLVPLKILRGHAVQDALGVLSIAWHPTLPWLVSAGADGDARLWTP</sequence>
<dbReference type="EMBL" id="AAYY01000020">
    <property type="protein sequence ID" value="EDP41550.1"/>
    <property type="status" value="ALT_FRAME"/>
    <property type="molecule type" value="Genomic_DNA"/>
</dbReference>
<dbReference type="RefSeq" id="XP_001728764.1">
    <property type="nucleotide sequence ID" value="XM_001728712.1"/>
</dbReference>
<dbReference type="SMR" id="A8QD31"/>
<dbReference type="FunCoup" id="A8QD31">
    <property type="interactions" value="408"/>
</dbReference>
<dbReference type="STRING" id="425265.A8QD31"/>
<dbReference type="GeneID" id="5853105"/>
<dbReference type="KEGG" id="mgl:MGL_4099"/>
<dbReference type="VEuPathDB" id="FungiDB:MGL_4099"/>
<dbReference type="InParanoid" id="A8QD31"/>
<dbReference type="OrthoDB" id="5571054at2759"/>
<dbReference type="Proteomes" id="UP000008837">
    <property type="component" value="Unassembled WGS sequence"/>
</dbReference>
<dbReference type="GO" id="GO:0005654">
    <property type="term" value="C:nucleoplasm"/>
    <property type="evidence" value="ECO:0007669"/>
    <property type="project" value="UniProtKB-SubCell"/>
</dbReference>
<dbReference type="GO" id="GO:0070545">
    <property type="term" value="C:PeBoW complex"/>
    <property type="evidence" value="ECO:0007669"/>
    <property type="project" value="TreeGrafter"/>
</dbReference>
<dbReference type="GO" id="GO:0030687">
    <property type="term" value="C:preribosome, large subunit precursor"/>
    <property type="evidence" value="ECO:0007669"/>
    <property type="project" value="UniProtKB-UniRule"/>
</dbReference>
<dbReference type="GO" id="GO:0043021">
    <property type="term" value="F:ribonucleoprotein complex binding"/>
    <property type="evidence" value="ECO:0007669"/>
    <property type="project" value="UniProtKB-UniRule"/>
</dbReference>
<dbReference type="GO" id="GO:0000466">
    <property type="term" value="P:maturation of 5.8S rRNA from tricistronic rRNA transcript (SSU-rRNA, 5.8S rRNA, LSU-rRNA)"/>
    <property type="evidence" value="ECO:0007669"/>
    <property type="project" value="UniProtKB-UniRule"/>
</dbReference>
<dbReference type="GO" id="GO:0000463">
    <property type="term" value="P:maturation of LSU-rRNA from tricistronic rRNA transcript (SSU-rRNA, 5.8S rRNA, LSU-rRNA)"/>
    <property type="evidence" value="ECO:0007669"/>
    <property type="project" value="UniProtKB-UniRule"/>
</dbReference>
<dbReference type="FunFam" id="2.130.10.10:FF:000576">
    <property type="entry name" value="Ribosome biogenesis protein ERB1"/>
    <property type="match status" value="1"/>
</dbReference>
<dbReference type="Gene3D" id="2.130.10.10">
    <property type="entry name" value="YVTN repeat-like/Quinoprotein amine dehydrogenase"/>
    <property type="match status" value="1"/>
</dbReference>
<dbReference type="HAMAP" id="MF_03027">
    <property type="entry name" value="BOP1"/>
    <property type="match status" value="1"/>
</dbReference>
<dbReference type="InterPro" id="IPR028598">
    <property type="entry name" value="BOP1/Erb1"/>
</dbReference>
<dbReference type="InterPro" id="IPR012953">
    <property type="entry name" value="BOP1_N_dom"/>
</dbReference>
<dbReference type="InterPro" id="IPR015943">
    <property type="entry name" value="WD40/YVTN_repeat-like_dom_sf"/>
</dbReference>
<dbReference type="InterPro" id="IPR036322">
    <property type="entry name" value="WD40_repeat_dom_sf"/>
</dbReference>
<dbReference type="InterPro" id="IPR001680">
    <property type="entry name" value="WD40_rpt"/>
</dbReference>
<dbReference type="PANTHER" id="PTHR17605:SF0">
    <property type="entry name" value="RIBOSOME BIOGENESIS PROTEIN BOP1"/>
    <property type="match status" value="1"/>
</dbReference>
<dbReference type="PANTHER" id="PTHR17605">
    <property type="entry name" value="RIBOSOME BIOGENESIS PROTEIN BOP1 BLOCK OF PROLIFERATION 1 PROTEIN"/>
    <property type="match status" value="1"/>
</dbReference>
<dbReference type="Pfam" id="PF08145">
    <property type="entry name" value="BOP1NT"/>
    <property type="match status" value="1"/>
</dbReference>
<dbReference type="Pfam" id="PF00400">
    <property type="entry name" value="WD40"/>
    <property type="match status" value="5"/>
</dbReference>
<dbReference type="SMART" id="SM01035">
    <property type="entry name" value="BOP1NT"/>
    <property type="match status" value="1"/>
</dbReference>
<dbReference type="SMART" id="SM00320">
    <property type="entry name" value="WD40"/>
    <property type="match status" value="5"/>
</dbReference>
<dbReference type="SUPFAM" id="SSF50978">
    <property type="entry name" value="WD40 repeat-like"/>
    <property type="match status" value="1"/>
</dbReference>
<dbReference type="PROSITE" id="PS00678">
    <property type="entry name" value="WD_REPEATS_1"/>
    <property type="match status" value="1"/>
</dbReference>
<dbReference type="PROSITE" id="PS50082">
    <property type="entry name" value="WD_REPEATS_2"/>
    <property type="match status" value="3"/>
</dbReference>
<dbReference type="PROSITE" id="PS50294">
    <property type="entry name" value="WD_REPEATS_REGION"/>
    <property type="match status" value="2"/>
</dbReference>
<proteinExistence type="inferred from homology"/>
<evidence type="ECO:0000255" key="1">
    <source>
        <dbReference type="HAMAP-Rule" id="MF_03027"/>
    </source>
</evidence>
<evidence type="ECO:0000256" key="2">
    <source>
        <dbReference type="SAM" id="MobiDB-lite"/>
    </source>
</evidence>
<evidence type="ECO:0000305" key="3"/>